<dbReference type="EMBL" id="AC145124">
    <property type="status" value="NOT_ANNOTATED_CDS"/>
    <property type="molecule type" value="Genomic_DNA"/>
</dbReference>
<dbReference type="EMBL" id="AL832996">
    <property type="protein sequence ID" value="CAH56347.1"/>
    <property type="molecule type" value="mRNA"/>
</dbReference>
<dbReference type="GlyGen" id="Q658T7">
    <property type="glycosylation" value="1 site, 1 O-linked glycan (1 site)"/>
</dbReference>
<dbReference type="BioMuta" id="HGNC:32250"/>
<dbReference type="DMDM" id="206558319"/>
<dbReference type="MassIVE" id="Q658T7"/>
<dbReference type="ProteomicsDB" id="65928">
    <molecule id="Q658T7-1"/>
</dbReference>
<dbReference type="AGR" id="HGNC:32246"/>
<dbReference type="AGR" id="HGNC:32250"/>
<dbReference type="GeneCards" id="FAM90A2P"/>
<dbReference type="HGNC" id="HGNC:32250">
    <property type="gene designation" value="FAM90A2P"/>
</dbReference>
<dbReference type="neXtProt" id="NX_Q658T7"/>
<dbReference type="InParanoid" id="Q658T7"/>
<dbReference type="PAN-GO" id="Q658T7">
    <property type="GO annotations" value="0 GO annotations based on evolutionary models"/>
</dbReference>
<dbReference type="PhylomeDB" id="Q658T7"/>
<dbReference type="Pharos" id="Q658T7">
    <property type="development level" value="Tdark"/>
</dbReference>
<dbReference type="Proteomes" id="UP000005640">
    <property type="component" value="Unplaced"/>
</dbReference>
<dbReference type="RNAct" id="Q658T7">
    <property type="molecule type" value="protein"/>
</dbReference>
<dbReference type="InterPro" id="IPR039213">
    <property type="entry name" value="FAM90"/>
</dbReference>
<dbReference type="InterPro" id="IPR041670">
    <property type="entry name" value="Znf-CCHC_6"/>
</dbReference>
<dbReference type="PANTHER" id="PTHR16035:SF14">
    <property type="entry name" value="FAMILY WITH SEQUENCE SIMILARITY 90 MEMBER A11, PSEUDOGENE-RELATED"/>
    <property type="match status" value="1"/>
</dbReference>
<dbReference type="PANTHER" id="PTHR16035">
    <property type="entry name" value="PROTEIN FAM90A1"/>
    <property type="match status" value="1"/>
</dbReference>
<dbReference type="Pfam" id="PF15288">
    <property type="entry name" value="zf-CCHC_6"/>
    <property type="match status" value="1"/>
</dbReference>
<comment type="alternative products">
    <event type="alternative splicing"/>
    <isoform>
        <id>Q658T7-1</id>
        <name>1</name>
        <sequence type="displayed"/>
    </isoform>
    <isoform>
        <id>Q658T7-2</id>
        <name>2</name>
        <sequence type="described" ref="VSP_034714"/>
    </isoform>
</comment>
<comment type="similarity">
    <text evidence="3">Belongs to the FAM90 family.</text>
</comment>
<comment type="caution">
    <text evidence="3">Could be the product of a pseudogene.</text>
</comment>
<reference key="1">
    <citation type="journal article" date="2006" name="Nature">
        <title>DNA sequence and analysis of human chromosome 8.</title>
        <authorList>
            <person name="Nusbaum C."/>
            <person name="Mikkelsen T.S."/>
            <person name="Zody M.C."/>
            <person name="Asakawa S."/>
            <person name="Taudien S."/>
            <person name="Garber M."/>
            <person name="Kodira C.D."/>
            <person name="Schueler M.G."/>
            <person name="Shimizu A."/>
            <person name="Whittaker C.A."/>
            <person name="Chang J.L."/>
            <person name="Cuomo C.A."/>
            <person name="Dewar K."/>
            <person name="FitzGerald M.G."/>
            <person name="Yang X."/>
            <person name="Allen N.R."/>
            <person name="Anderson S."/>
            <person name="Asakawa T."/>
            <person name="Blechschmidt K."/>
            <person name="Bloom T."/>
            <person name="Borowsky M.L."/>
            <person name="Butler J."/>
            <person name="Cook A."/>
            <person name="Corum B."/>
            <person name="DeArellano K."/>
            <person name="DeCaprio D."/>
            <person name="Dooley K.T."/>
            <person name="Dorris L. III"/>
            <person name="Engels R."/>
            <person name="Gloeckner G."/>
            <person name="Hafez N."/>
            <person name="Hagopian D.S."/>
            <person name="Hall J.L."/>
            <person name="Ishikawa S.K."/>
            <person name="Jaffe D.B."/>
            <person name="Kamat A."/>
            <person name="Kudoh J."/>
            <person name="Lehmann R."/>
            <person name="Lokitsang T."/>
            <person name="Macdonald P."/>
            <person name="Major J.E."/>
            <person name="Matthews C.D."/>
            <person name="Mauceli E."/>
            <person name="Menzel U."/>
            <person name="Mihalev A.H."/>
            <person name="Minoshima S."/>
            <person name="Murayama Y."/>
            <person name="Naylor J.W."/>
            <person name="Nicol R."/>
            <person name="Nguyen C."/>
            <person name="O'Leary S.B."/>
            <person name="O'Neill K."/>
            <person name="Parker S.C.J."/>
            <person name="Polley A."/>
            <person name="Raymond C.K."/>
            <person name="Reichwald K."/>
            <person name="Rodriguez J."/>
            <person name="Sasaki T."/>
            <person name="Schilhabel M."/>
            <person name="Siddiqui R."/>
            <person name="Smith C.L."/>
            <person name="Sneddon T.P."/>
            <person name="Talamas J.A."/>
            <person name="Tenzin P."/>
            <person name="Topham K."/>
            <person name="Venkataraman V."/>
            <person name="Wen G."/>
            <person name="Yamazaki S."/>
            <person name="Young S.K."/>
            <person name="Zeng Q."/>
            <person name="Zimmer A.R."/>
            <person name="Rosenthal A."/>
            <person name="Birren B.W."/>
            <person name="Platzer M."/>
            <person name="Shimizu N."/>
            <person name="Lander E.S."/>
        </authorList>
    </citation>
    <scope>NUCLEOTIDE SEQUENCE [LARGE SCALE GENOMIC DNA]</scope>
</reference>
<reference key="2">
    <citation type="journal article" date="2007" name="BMC Genomics">
        <title>The full-ORF clone resource of the German cDNA consortium.</title>
        <authorList>
            <person name="Bechtel S."/>
            <person name="Rosenfelder H."/>
            <person name="Duda A."/>
            <person name="Schmidt C.P."/>
            <person name="Ernst U."/>
            <person name="Wellenreuther R."/>
            <person name="Mehrle A."/>
            <person name="Schuster C."/>
            <person name="Bahr A."/>
            <person name="Bloecker H."/>
            <person name="Heubner D."/>
            <person name="Hoerlein A."/>
            <person name="Michel G."/>
            <person name="Wedler H."/>
            <person name="Koehrer K."/>
            <person name="Ottenwaelder B."/>
            <person name="Poustka A."/>
            <person name="Wiemann S."/>
            <person name="Schupp I."/>
        </authorList>
    </citation>
    <scope>NUCLEOTIDE SEQUENCE [LARGE SCALE MRNA] OF 21-463 (ISOFORM 2)</scope>
    <source>
        <tissue>Stomach</tissue>
    </source>
</reference>
<feature type="chain" id="PRO_0000344035" description="Putative protein FAM90A2P">
    <location>
        <begin position="1"/>
        <end position="463"/>
    </location>
</feature>
<feature type="region of interest" description="Disordered" evidence="1">
    <location>
        <begin position="1"/>
        <end position="42"/>
    </location>
</feature>
<feature type="region of interest" description="Disordered" evidence="1">
    <location>
        <begin position="67"/>
        <end position="115"/>
    </location>
</feature>
<feature type="region of interest" description="Disordered" evidence="1">
    <location>
        <begin position="150"/>
        <end position="295"/>
    </location>
</feature>
<feature type="region of interest" description="Disordered" evidence="1">
    <location>
        <begin position="326"/>
        <end position="365"/>
    </location>
</feature>
<feature type="compositionally biased region" description="Basic and acidic residues" evidence="1">
    <location>
        <begin position="74"/>
        <end position="83"/>
    </location>
</feature>
<feature type="compositionally biased region" description="Basic and acidic residues" evidence="1">
    <location>
        <begin position="97"/>
        <end position="114"/>
    </location>
</feature>
<feature type="compositionally biased region" description="Basic and acidic residues" evidence="1">
    <location>
        <begin position="159"/>
        <end position="170"/>
    </location>
</feature>
<feature type="compositionally biased region" description="Low complexity" evidence="1">
    <location>
        <begin position="180"/>
        <end position="198"/>
    </location>
</feature>
<feature type="splice variant" id="VSP_034714" description="In isoform 2." evidence="2">
    <location>
        <begin position="267"/>
        <end position="463"/>
    </location>
</feature>
<feature type="sequence conflict" description="In Ref. 2; CAH56347." evidence="3" ref="2">
    <original>S</original>
    <variation>C</variation>
    <location>
        <position position="156"/>
    </location>
</feature>
<protein>
    <recommendedName>
        <fullName>Putative protein FAM90A2P</fullName>
    </recommendedName>
</protein>
<organism>
    <name type="scientific">Homo sapiens</name>
    <name type="common">Human</name>
    <dbReference type="NCBI Taxonomy" id="9606"/>
    <lineage>
        <taxon>Eukaryota</taxon>
        <taxon>Metazoa</taxon>
        <taxon>Chordata</taxon>
        <taxon>Craniata</taxon>
        <taxon>Vertebrata</taxon>
        <taxon>Euteleostomi</taxon>
        <taxon>Mammalia</taxon>
        <taxon>Eutheria</taxon>
        <taxon>Euarchontoglires</taxon>
        <taxon>Primates</taxon>
        <taxon>Haplorrhini</taxon>
        <taxon>Catarrhini</taxon>
        <taxon>Hominidae</taxon>
        <taxon>Homo</taxon>
    </lineage>
</organism>
<evidence type="ECO:0000256" key="1">
    <source>
        <dbReference type="SAM" id="MobiDB-lite"/>
    </source>
</evidence>
<evidence type="ECO:0000303" key="2">
    <source>
    </source>
</evidence>
<evidence type="ECO:0000305" key="3"/>
<name>F90A2_HUMAN</name>
<accession>Q658T7</accession>
<keyword id="KW-0025">Alternative splicing</keyword>
<keyword id="KW-1185">Reference proteome</keyword>
<gene>
    <name type="primary">FAM90A2P</name>
</gene>
<proteinExistence type="uncertain"/>
<sequence>MTARRDPKPGAKRLVRAQTLQKQRRAPVGPRAPPPDEEDPRLKCKNCRALGHTVRSTRCPMKCWKAALVPPTLGKKEGKENLKPWKPQVEANPGPLNKDKGEKEERPRQQDPQRKALLHIFSGKPPEKLLPNRKGSTESSVFLRVASRPMPVHTTSKRPCVDPELADRSATEMSGRGSVLASLSPLRKASLRSSSSLGPKERQTGAAADIPQPAVRHQGPEPLLVVKPTHSSREGGCREVPQAASKTHGLLQAVRPQAQDKRPAVTQPGPPAATHSLGLGSNLSFRPGAKRPAQAPIQGCLNFPKKPRLGPFQIPESAIQGGELGALENLQPPPAATELGPSTSPQMGRRTPAQVPGVDRQPPHSRPCLPTAQACTMSHHPAASHDGAQPLRVLFRRLENRRWSSSLLAAPSFHSPEKLGVFLAQSPHVSEKSEGPCVRVPPNVLYEDLQVSSSSEDSDSDLQ</sequence>